<proteinExistence type="inferred from homology"/>
<gene>
    <name type="primary">ndhF</name>
</gene>
<comment type="function">
    <text evidence="1">NDH shuttles electrons from NAD(P)H:plastoquinone, via FMN and iron-sulfur (Fe-S) centers, to quinones in the photosynthetic chain and possibly in a chloroplast respiratory chain. The immediate electron acceptor for the enzyme in this species is believed to be plastoquinone. Couples the redox reaction to proton translocation, and thus conserves the redox energy in a proton gradient (By similarity).</text>
</comment>
<comment type="catalytic activity">
    <reaction>
        <text>a plastoquinone + NADH + (n+1) H(+)(in) = a plastoquinol + NAD(+) + n H(+)(out)</text>
        <dbReference type="Rhea" id="RHEA:42608"/>
        <dbReference type="Rhea" id="RHEA-COMP:9561"/>
        <dbReference type="Rhea" id="RHEA-COMP:9562"/>
        <dbReference type="ChEBI" id="CHEBI:15378"/>
        <dbReference type="ChEBI" id="CHEBI:17757"/>
        <dbReference type="ChEBI" id="CHEBI:57540"/>
        <dbReference type="ChEBI" id="CHEBI:57945"/>
        <dbReference type="ChEBI" id="CHEBI:62192"/>
    </reaction>
</comment>
<comment type="catalytic activity">
    <reaction>
        <text>a plastoquinone + NADPH + (n+1) H(+)(in) = a plastoquinol + NADP(+) + n H(+)(out)</text>
        <dbReference type="Rhea" id="RHEA:42612"/>
        <dbReference type="Rhea" id="RHEA-COMP:9561"/>
        <dbReference type="Rhea" id="RHEA-COMP:9562"/>
        <dbReference type="ChEBI" id="CHEBI:15378"/>
        <dbReference type="ChEBI" id="CHEBI:17757"/>
        <dbReference type="ChEBI" id="CHEBI:57783"/>
        <dbReference type="ChEBI" id="CHEBI:58349"/>
        <dbReference type="ChEBI" id="CHEBI:62192"/>
    </reaction>
</comment>
<comment type="subunit">
    <text evidence="1">NDH is composed of at least 16 different subunits, 5 of which are encoded in the nucleus.</text>
</comment>
<comment type="subcellular location">
    <subcellularLocation>
        <location evidence="1">Plastid</location>
        <location evidence="1">Chloroplast thylakoid membrane</location>
        <topology evidence="1">Multi-pass membrane protein</topology>
    </subcellularLocation>
</comment>
<comment type="similarity">
    <text evidence="3">Belongs to the complex I subunit 5 family.</text>
</comment>
<feature type="chain" id="PRO_0000277448" description="NAD(P)H-quinone oxidoreductase subunit 5, chloroplastic">
    <location>
        <begin position="1"/>
        <end position="750"/>
    </location>
</feature>
<feature type="transmembrane region" description="Helical" evidence="2">
    <location>
        <begin position="9"/>
        <end position="29"/>
    </location>
</feature>
<feature type="transmembrane region" description="Helical" evidence="2">
    <location>
        <begin position="40"/>
        <end position="60"/>
    </location>
</feature>
<feature type="transmembrane region" description="Helical" evidence="2">
    <location>
        <begin position="89"/>
        <end position="109"/>
    </location>
</feature>
<feature type="transmembrane region" description="Helical" evidence="2">
    <location>
        <begin position="125"/>
        <end position="145"/>
    </location>
</feature>
<feature type="transmembrane region" description="Helical" evidence="2">
    <location>
        <begin position="147"/>
        <end position="167"/>
    </location>
</feature>
<feature type="transmembrane region" description="Helical" evidence="2">
    <location>
        <begin position="185"/>
        <end position="205"/>
    </location>
</feature>
<feature type="transmembrane region" description="Helical" evidence="2">
    <location>
        <begin position="219"/>
        <end position="239"/>
    </location>
</feature>
<feature type="transmembrane region" description="Helical" evidence="2">
    <location>
        <begin position="258"/>
        <end position="278"/>
    </location>
</feature>
<feature type="transmembrane region" description="Helical" evidence="2">
    <location>
        <begin position="280"/>
        <end position="300"/>
    </location>
</feature>
<feature type="transmembrane region" description="Helical" evidence="2">
    <location>
        <begin position="327"/>
        <end position="347"/>
    </location>
</feature>
<feature type="transmembrane region" description="Helical" evidence="2">
    <location>
        <begin position="354"/>
        <end position="374"/>
    </location>
</feature>
<feature type="transmembrane region" description="Helical" evidence="2">
    <location>
        <begin position="396"/>
        <end position="416"/>
    </location>
</feature>
<feature type="transmembrane region" description="Helical" evidence="2">
    <location>
        <begin position="425"/>
        <end position="445"/>
    </location>
</feature>
<feature type="transmembrane region" description="Helical" evidence="2">
    <location>
        <begin position="554"/>
        <end position="574"/>
    </location>
</feature>
<feature type="transmembrane region" description="Helical" evidence="2">
    <location>
        <begin position="607"/>
        <end position="627"/>
    </location>
</feature>
<feature type="transmembrane region" description="Helical" evidence="2">
    <location>
        <begin position="728"/>
        <end position="748"/>
    </location>
</feature>
<reference key="1">
    <citation type="journal article" date="2005" name="Plant Mol. Biol.">
        <title>Complete chloroplast genome sequence of Glycine max and comparative analyses with other legume genomes.</title>
        <authorList>
            <person name="Saski C."/>
            <person name="Lee S.-B."/>
            <person name="Daniell H."/>
            <person name="Wood T.C."/>
            <person name="Tomkins J."/>
            <person name="Kim H.-G."/>
            <person name="Jansen R.K."/>
        </authorList>
    </citation>
    <scope>NUCLEOTIDE SEQUENCE [LARGE SCALE GENOMIC DNA]</scope>
    <source>
        <strain>cv. PI 437654</strain>
    </source>
</reference>
<reference key="2">
    <citation type="journal article" date="2006" name="Mol. Phylogenet. Evol.">
        <title>Phylogeny of the Cucurbitales based on DNA sequences of nine loci from three genomes: implications for morphological and sexual system evolution.</title>
        <authorList>
            <person name="Zhang L.-B."/>
            <person name="Simmons M.P."/>
            <person name="Kocyan A."/>
            <person name="Renner S.S."/>
        </authorList>
    </citation>
    <scope>NUCLEOTIDE SEQUENCE [GENOMIC DNA] OF 336-537</scope>
</reference>
<geneLocation type="chloroplast"/>
<keyword id="KW-0150">Chloroplast</keyword>
<keyword id="KW-0472">Membrane</keyword>
<keyword id="KW-0520">NAD</keyword>
<keyword id="KW-0521">NADP</keyword>
<keyword id="KW-0934">Plastid</keyword>
<keyword id="KW-0618">Plastoquinone</keyword>
<keyword id="KW-0874">Quinone</keyword>
<keyword id="KW-1185">Reference proteome</keyword>
<keyword id="KW-0793">Thylakoid</keyword>
<keyword id="KW-1278">Translocase</keyword>
<keyword id="KW-0812">Transmembrane</keyword>
<keyword id="KW-1133">Transmembrane helix</keyword>
<keyword id="KW-0813">Transport</keyword>
<accession>Q2PMM9</accession>
<accession>Q29S44</accession>
<protein>
    <recommendedName>
        <fullName>NAD(P)H-quinone oxidoreductase subunit 5, chloroplastic</fullName>
        <ecNumber>7.1.1.-</ecNumber>
    </recommendedName>
    <alternativeName>
        <fullName>NAD(P)H dehydrogenase subunit 5</fullName>
    </alternativeName>
    <alternativeName>
        <fullName>NADH-plastoquinone oxidoreductase subunit 5</fullName>
    </alternativeName>
</protein>
<sequence length="750" mass="85653">MEYTHQYSWIIPFIPFPVPMLIGVGLLLFPTATKYLRRMWAFPSILLLTIVMMFSLDLSIHQINNSSFYQYVWSWTINNDLSLEFGYLIDSLTSIMSILITTVGILVLIYSDNYMSHDQGYLRFFAYLTLFNISMLGLVTSSNLIQIYVFWELVGMCSYLLIGFWFTRPIAANACQKAFVTNRVGDFGLLLGILGLYWITGSLEFRDLFQIINNLIYKNEVNIFFLTLVALLLFCGSVAKSAQFPLHVWLPDAMEGPTPISALIHAATMVAAGIFLVARLLPLFIVLPAIMNGIAFIGIITVVLGATLAIAQQDIKKNLAYSTMSQLGYMMLALGMGSYRAALFHLITHAYSKALLFLGSGSIIHSMEALVGYSPAKSQNMVLMGGLTKHVPITKTSFLVGTLSLCGIPPFACFWSKDEILNDSWLYSPIFAIIACCTAGLTAFYMFRIYLLVFEGYLNVHFLNFNGKKNSSFYSISLWGKKEVKQKLKNKNFFLALLRMKNNEMTSFFIRKIYPHRINQNVKNITCLFFDINYFGTKKTACLYPNESDNTMRFSILVLVLFTLFVGTIGISFSYKGIDFDILSKWLIPFIDLLHKNSKNFVDWYEFLTNAAFSVILTFLGIFIASFFYKPVYSDLQNLNLLNLFEKNVLNKKVADYFQNVIYDWSYNRGYIDVFYDISLITSVRKLVQFNYFFDKKIIDAIPNGIGITSFFMGEAIKYVGGGRISSYILLYIFYIVIFILIWYFLFTNI</sequence>
<name>NU5C_SOYBN</name>
<evidence type="ECO:0000250" key="1"/>
<evidence type="ECO:0000255" key="2"/>
<evidence type="ECO:0000305" key="3"/>
<organism>
    <name type="scientific">Glycine max</name>
    <name type="common">Soybean</name>
    <name type="synonym">Glycine hispida</name>
    <dbReference type="NCBI Taxonomy" id="3847"/>
    <lineage>
        <taxon>Eukaryota</taxon>
        <taxon>Viridiplantae</taxon>
        <taxon>Streptophyta</taxon>
        <taxon>Embryophyta</taxon>
        <taxon>Tracheophyta</taxon>
        <taxon>Spermatophyta</taxon>
        <taxon>Magnoliopsida</taxon>
        <taxon>eudicotyledons</taxon>
        <taxon>Gunneridae</taxon>
        <taxon>Pentapetalae</taxon>
        <taxon>rosids</taxon>
        <taxon>fabids</taxon>
        <taxon>Fabales</taxon>
        <taxon>Fabaceae</taxon>
        <taxon>Papilionoideae</taxon>
        <taxon>50 kb inversion clade</taxon>
        <taxon>NPAAA clade</taxon>
        <taxon>indigoferoid/millettioid clade</taxon>
        <taxon>Phaseoleae</taxon>
        <taxon>Glycine</taxon>
        <taxon>Glycine subgen. Soja</taxon>
    </lineage>
</organism>
<dbReference type="EC" id="7.1.1.-"/>
<dbReference type="EMBL" id="DQ317523">
    <property type="protein sequence ID" value="ABC25180.1"/>
    <property type="molecule type" value="Genomic_DNA"/>
</dbReference>
<dbReference type="EMBL" id="AY968515">
    <property type="protein sequence ID" value="AAZ08375.1"/>
    <property type="molecule type" value="Genomic_DNA"/>
</dbReference>
<dbReference type="RefSeq" id="YP_538821.1">
    <property type="nucleotide sequence ID" value="NC_007942.1"/>
</dbReference>
<dbReference type="SMR" id="Q2PMM9"/>
<dbReference type="FunCoup" id="Q2PMM9">
    <property type="interactions" value="15"/>
</dbReference>
<dbReference type="STRING" id="3847.Q2PMM9"/>
<dbReference type="PaxDb" id="3847-GLYMA06G32802.1"/>
<dbReference type="GeneID" id="3989365"/>
<dbReference type="KEGG" id="gmx:3989365"/>
<dbReference type="eggNOG" id="KOG4668">
    <property type="taxonomic scope" value="Eukaryota"/>
</dbReference>
<dbReference type="InParanoid" id="Q2PMM9"/>
<dbReference type="Proteomes" id="UP000008827">
    <property type="component" value="Chloroplast"/>
</dbReference>
<dbReference type="GO" id="GO:0009535">
    <property type="term" value="C:chloroplast thylakoid membrane"/>
    <property type="evidence" value="ECO:0007669"/>
    <property type="project" value="UniProtKB-SubCell"/>
</dbReference>
<dbReference type="GO" id="GO:0008137">
    <property type="term" value="F:NADH dehydrogenase (ubiquinone) activity"/>
    <property type="evidence" value="ECO:0007669"/>
    <property type="project" value="InterPro"/>
</dbReference>
<dbReference type="GO" id="GO:0048038">
    <property type="term" value="F:quinone binding"/>
    <property type="evidence" value="ECO:0007669"/>
    <property type="project" value="UniProtKB-KW"/>
</dbReference>
<dbReference type="GO" id="GO:0042773">
    <property type="term" value="P:ATP synthesis coupled electron transport"/>
    <property type="evidence" value="ECO:0007669"/>
    <property type="project" value="InterPro"/>
</dbReference>
<dbReference type="GO" id="GO:0015990">
    <property type="term" value="P:electron transport coupled proton transport"/>
    <property type="evidence" value="ECO:0000318"/>
    <property type="project" value="GO_Central"/>
</dbReference>
<dbReference type="Gene3D" id="1.20.5.2700">
    <property type="match status" value="1"/>
</dbReference>
<dbReference type="InterPro" id="IPR002128">
    <property type="entry name" value="NADH_UbQ_OxRdtase_chlpt_su5_C"/>
</dbReference>
<dbReference type="InterPro" id="IPR018393">
    <property type="entry name" value="NADHpl_OxRdtase_5_subgr"/>
</dbReference>
<dbReference type="InterPro" id="IPR001750">
    <property type="entry name" value="ND/Mrp_TM"/>
</dbReference>
<dbReference type="InterPro" id="IPR003945">
    <property type="entry name" value="NU5C-like"/>
</dbReference>
<dbReference type="InterPro" id="IPR001516">
    <property type="entry name" value="Proton_antipo_N"/>
</dbReference>
<dbReference type="NCBIfam" id="TIGR01974">
    <property type="entry name" value="NDH_I_L"/>
    <property type="match status" value="1"/>
</dbReference>
<dbReference type="NCBIfam" id="NF005141">
    <property type="entry name" value="PRK06590.1"/>
    <property type="match status" value="1"/>
</dbReference>
<dbReference type="PANTHER" id="PTHR42829">
    <property type="entry name" value="NADH-UBIQUINONE OXIDOREDUCTASE CHAIN 5"/>
    <property type="match status" value="1"/>
</dbReference>
<dbReference type="PANTHER" id="PTHR42829:SF2">
    <property type="entry name" value="NADH-UBIQUINONE OXIDOREDUCTASE CHAIN 5"/>
    <property type="match status" value="1"/>
</dbReference>
<dbReference type="Pfam" id="PF01010">
    <property type="entry name" value="Proton_antipo_C"/>
    <property type="match status" value="1"/>
</dbReference>
<dbReference type="Pfam" id="PF00361">
    <property type="entry name" value="Proton_antipo_M"/>
    <property type="match status" value="1"/>
</dbReference>
<dbReference type="Pfam" id="PF00662">
    <property type="entry name" value="Proton_antipo_N"/>
    <property type="match status" value="1"/>
</dbReference>
<dbReference type="PRINTS" id="PR01434">
    <property type="entry name" value="NADHDHGNASE5"/>
</dbReference>
<dbReference type="PRINTS" id="PR01435">
    <property type="entry name" value="NPOXDRDTASE5"/>
</dbReference>